<protein>
    <recommendedName>
        <fullName evidence="1">Argininosuccinate lyase</fullName>
        <shortName evidence="1">ASAL</shortName>
        <ecNumber evidence="1">4.3.2.1</ecNumber>
    </recommendedName>
    <alternativeName>
        <fullName evidence="1">Arginosuccinase</fullName>
    </alternativeName>
</protein>
<proteinExistence type="inferred from homology"/>
<sequence length="460" mass="52043">MDKMWSGRFSATASSLLDQFNASIMFDRKLYREDIEGSIAHATMLAKQGILTTDELSQITKGLSQVKEEIESGVFEWKISDEDLHMGIEKRLTAIIGDAGKKLHTARSRNDQVAVDFRRYVLRKNLEIVDALKLLMNEILVIASKHTQTLLPGMTHLQHAQPINFAFHLSAYLSMFKRDIERFESSYKRNNISPLGCAALAGTPHKIDRDMTAELLGFESASINCLDTVSDRDFALEILFNISTMMMHISRLSEELVMWSSYEFRFVELSDEYSTGSSIMPQKKNPDVPELLRGKTGRVYGSLMGLLTVMKALPLAYNKDTQEDKEGVFDAVETAEISLEILKEALKTMQVKPHYMKNACKIGHLSATDLADYLVQKCDIPFREAHFITGKAVAKSEELKIDLSDIELKYLKEIDDRINEDVLAFLSIENSMNARTSAGGTSTKRTEEQLKYFENFLKAE</sequence>
<keyword id="KW-0028">Amino-acid biosynthesis</keyword>
<keyword id="KW-0055">Arginine biosynthesis</keyword>
<keyword id="KW-0963">Cytoplasm</keyword>
<keyword id="KW-0456">Lyase</keyword>
<keyword id="KW-1185">Reference proteome</keyword>
<feature type="chain" id="PRO_0000240789" description="Argininosuccinate lyase">
    <location>
        <begin position="1"/>
        <end position="460"/>
    </location>
</feature>
<name>ARLY_SULDN</name>
<accession>Q30S87</accession>
<comment type="catalytic activity">
    <reaction evidence="1">
        <text>2-(N(omega)-L-arginino)succinate = fumarate + L-arginine</text>
        <dbReference type="Rhea" id="RHEA:24020"/>
        <dbReference type="ChEBI" id="CHEBI:29806"/>
        <dbReference type="ChEBI" id="CHEBI:32682"/>
        <dbReference type="ChEBI" id="CHEBI:57472"/>
        <dbReference type="EC" id="4.3.2.1"/>
    </reaction>
</comment>
<comment type="pathway">
    <text evidence="1">Amino-acid biosynthesis; L-arginine biosynthesis; L-arginine from L-ornithine and carbamoyl phosphate: step 3/3.</text>
</comment>
<comment type="subcellular location">
    <subcellularLocation>
        <location evidence="1">Cytoplasm</location>
    </subcellularLocation>
</comment>
<comment type="similarity">
    <text evidence="1">Belongs to the lyase 1 family. Argininosuccinate lyase subfamily.</text>
</comment>
<dbReference type="EC" id="4.3.2.1" evidence="1"/>
<dbReference type="EMBL" id="CP000153">
    <property type="protein sequence ID" value="ABB44144.1"/>
    <property type="molecule type" value="Genomic_DNA"/>
</dbReference>
<dbReference type="RefSeq" id="WP_011372496.1">
    <property type="nucleotide sequence ID" value="NC_007575.1"/>
</dbReference>
<dbReference type="SMR" id="Q30S87"/>
<dbReference type="STRING" id="326298.Suden_0866"/>
<dbReference type="KEGG" id="tdn:Suden_0866"/>
<dbReference type="eggNOG" id="COG0165">
    <property type="taxonomic scope" value="Bacteria"/>
</dbReference>
<dbReference type="HOGENOM" id="CLU_027272_2_3_7"/>
<dbReference type="OrthoDB" id="9769623at2"/>
<dbReference type="UniPathway" id="UPA00068">
    <property type="reaction ID" value="UER00114"/>
</dbReference>
<dbReference type="Proteomes" id="UP000002714">
    <property type="component" value="Chromosome"/>
</dbReference>
<dbReference type="GO" id="GO:0005829">
    <property type="term" value="C:cytosol"/>
    <property type="evidence" value="ECO:0007669"/>
    <property type="project" value="TreeGrafter"/>
</dbReference>
<dbReference type="GO" id="GO:0004056">
    <property type="term" value="F:argininosuccinate lyase activity"/>
    <property type="evidence" value="ECO:0007669"/>
    <property type="project" value="UniProtKB-UniRule"/>
</dbReference>
<dbReference type="GO" id="GO:0042450">
    <property type="term" value="P:arginine biosynthetic process via ornithine"/>
    <property type="evidence" value="ECO:0007669"/>
    <property type="project" value="InterPro"/>
</dbReference>
<dbReference type="GO" id="GO:0006526">
    <property type="term" value="P:L-arginine biosynthetic process"/>
    <property type="evidence" value="ECO:0007669"/>
    <property type="project" value="UniProtKB-UniRule"/>
</dbReference>
<dbReference type="CDD" id="cd01359">
    <property type="entry name" value="Argininosuccinate_lyase"/>
    <property type="match status" value="1"/>
</dbReference>
<dbReference type="FunFam" id="1.10.275.10:FF:000002">
    <property type="entry name" value="Argininosuccinate lyase"/>
    <property type="match status" value="1"/>
</dbReference>
<dbReference type="FunFam" id="1.10.40.30:FF:000001">
    <property type="entry name" value="Argininosuccinate lyase"/>
    <property type="match status" value="1"/>
</dbReference>
<dbReference type="FunFam" id="1.20.200.10:FF:000015">
    <property type="entry name" value="argininosuccinate lyase isoform X2"/>
    <property type="match status" value="1"/>
</dbReference>
<dbReference type="Gene3D" id="1.10.40.30">
    <property type="entry name" value="Fumarase/aspartase (C-terminal domain)"/>
    <property type="match status" value="1"/>
</dbReference>
<dbReference type="Gene3D" id="1.20.200.10">
    <property type="entry name" value="Fumarase/aspartase (Central domain)"/>
    <property type="match status" value="1"/>
</dbReference>
<dbReference type="Gene3D" id="1.10.275.10">
    <property type="entry name" value="Fumarase/aspartase (N-terminal domain)"/>
    <property type="match status" value="1"/>
</dbReference>
<dbReference type="HAMAP" id="MF_00006">
    <property type="entry name" value="Arg_succ_lyase"/>
    <property type="match status" value="1"/>
</dbReference>
<dbReference type="InterPro" id="IPR029419">
    <property type="entry name" value="Arg_succ_lyase_C"/>
</dbReference>
<dbReference type="InterPro" id="IPR009049">
    <property type="entry name" value="Argininosuccinate_lyase"/>
</dbReference>
<dbReference type="InterPro" id="IPR024083">
    <property type="entry name" value="Fumarase/histidase_N"/>
</dbReference>
<dbReference type="InterPro" id="IPR020557">
    <property type="entry name" value="Fumarate_lyase_CS"/>
</dbReference>
<dbReference type="InterPro" id="IPR000362">
    <property type="entry name" value="Fumarate_lyase_fam"/>
</dbReference>
<dbReference type="InterPro" id="IPR022761">
    <property type="entry name" value="Fumarate_lyase_N"/>
</dbReference>
<dbReference type="InterPro" id="IPR008948">
    <property type="entry name" value="L-Aspartase-like"/>
</dbReference>
<dbReference type="NCBIfam" id="TIGR00838">
    <property type="entry name" value="argH"/>
    <property type="match status" value="1"/>
</dbReference>
<dbReference type="PANTHER" id="PTHR43814">
    <property type="entry name" value="ARGININOSUCCINATE LYASE"/>
    <property type="match status" value="1"/>
</dbReference>
<dbReference type="PANTHER" id="PTHR43814:SF1">
    <property type="entry name" value="ARGININOSUCCINATE LYASE"/>
    <property type="match status" value="1"/>
</dbReference>
<dbReference type="Pfam" id="PF14698">
    <property type="entry name" value="ASL_C2"/>
    <property type="match status" value="1"/>
</dbReference>
<dbReference type="Pfam" id="PF00206">
    <property type="entry name" value="Lyase_1"/>
    <property type="match status" value="1"/>
</dbReference>
<dbReference type="PRINTS" id="PR00145">
    <property type="entry name" value="ARGSUCLYASE"/>
</dbReference>
<dbReference type="PRINTS" id="PR00149">
    <property type="entry name" value="FUMRATELYASE"/>
</dbReference>
<dbReference type="SUPFAM" id="SSF48557">
    <property type="entry name" value="L-aspartase-like"/>
    <property type="match status" value="1"/>
</dbReference>
<dbReference type="PROSITE" id="PS00163">
    <property type="entry name" value="FUMARATE_LYASES"/>
    <property type="match status" value="1"/>
</dbReference>
<evidence type="ECO:0000255" key="1">
    <source>
        <dbReference type="HAMAP-Rule" id="MF_00006"/>
    </source>
</evidence>
<organism>
    <name type="scientific">Sulfurimonas denitrificans (strain ATCC 33889 / DSM 1251)</name>
    <name type="common">Thiomicrospira denitrificans (strain ATCC 33889 / DSM 1251)</name>
    <dbReference type="NCBI Taxonomy" id="326298"/>
    <lineage>
        <taxon>Bacteria</taxon>
        <taxon>Pseudomonadati</taxon>
        <taxon>Campylobacterota</taxon>
        <taxon>Epsilonproteobacteria</taxon>
        <taxon>Campylobacterales</taxon>
        <taxon>Sulfurimonadaceae</taxon>
        <taxon>Sulfurimonas</taxon>
    </lineage>
</organism>
<reference key="1">
    <citation type="journal article" date="2008" name="Appl. Environ. Microbiol.">
        <title>Genome of the epsilonproteobacterial chemolithoautotroph Sulfurimonas denitrificans.</title>
        <authorList>
            <person name="Sievert S.M."/>
            <person name="Scott K.M."/>
            <person name="Klotz M.G."/>
            <person name="Chain P.S.G."/>
            <person name="Hauser L.J."/>
            <person name="Hemp J."/>
            <person name="Huegler M."/>
            <person name="Land M."/>
            <person name="Lapidus A."/>
            <person name="Larimer F.W."/>
            <person name="Lucas S."/>
            <person name="Malfatti S.A."/>
            <person name="Meyer F."/>
            <person name="Paulsen I.T."/>
            <person name="Ren Q."/>
            <person name="Simon J."/>
            <person name="Bailey K."/>
            <person name="Diaz E."/>
            <person name="Fitzpatrick K.A."/>
            <person name="Glover B."/>
            <person name="Gwatney N."/>
            <person name="Korajkic A."/>
            <person name="Long A."/>
            <person name="Mobberley J.M."/>
            <person name="Pantry S.N."/>
            <person name="Pazder G."/>
            <person name="Peterson S."/>
            <person name="Quintanilla J.D."/>
            <person name="Sprinkle R."/>
            <person name="Stephens J."/>
            <person name="Thomas P."/>
            <person name="Vaughn R."/>
            <person name="Weber M.J."/>
            <person name="Wooten L.L."/>
        </authorList>
    </citation>
    <scope>NUCLEOTIDE SEQUENCE [LARGE SCALE GENOMIC DNA]</scope>
    <source>
        <strain>ATCC 33889 / DSM 1251</strain>
    </source>
</reference>
<gene>
    <name evidence="1" type="primary">argH</name>
    <name type="ordered locus">Suden_0866</name>
</gene>